<comment type="subcellular location">
    <subcellularLocation>
        <location>Mitochondrion</location>
    </subcellularLocation>
    <subcellularLocation>
        <location evidence="1">Membrane</location>
        <topology evidence="1">Single-pass membrane protein</topology>
    </subcellularLocation>
</comment>
<comment type="similarity">
    <text evidence="4">Belongs to the LCL3 family.</text>
</comment>
<keyword id="KW-0106">Calcium</keyword>
<keyword id="KW-0255">Endonuclease</keyword>
<keyword id="KW-0378">Hydrolase</keyword>
<keyword id="KW-0472">Membrane</keyword>
<keyword id="KW-0479">Metal-binding</keyword>
<keyword id="KW-0496">Mitochondrion</keyword>
<keyword id="KW-0540">Nuclease</keyword>
<keyword id="KW-1185">Reference proteome</keyword>
<keyword id="KW-0812">Transmembrane</keyword>
<keyword id="KW-1133">Transmembrane helix</keyword>
<protein>
    <recommendedName>
        <fullName>Probable endonuclease LCL3</fullName>
        <ecNumber>3.1.-.-</ecNumber>
    </recommendedName>
</protein>
<gene>
    <name type="primary">LCL3</name>
    <name type="ordered locus">AFL066C</name>
    <name type="ORF">AGOS_AFL066C</name>
</gene>
<reference key="1">
    <citation type="journal article" date="2004" name="Science">
        <title>The Ashbya gossypii genome as a tool for mapping the ancient Saccharomyces cerevisiae genome.</title>
        <authorList>
            <person name="Dietrich F.S."/>
            <person name="Voegeli S."/>
            <person name="Brachat S."/>
            <person name="Lerch A."/>
            <person name="Gates K."/>
            <person name="Steiner S."/>
            <person name="Mohr C."/>
            <person name="Poehlmann R."/>
            <person name="Luedi P."/>
            <person name="Choi S."/>
            <person name="Wing R.A."/>
            <person name="Flavier A."/>
            <person name="Gaffney T.D."/>
            <person name="Philippsen P."/>
        </authorList>
    </citation>
    <scope>NUCLEOTIDE SEQUENCE [LARGE SCALE GENOMIC DNA]</scope>
    <source>
        <strain>ATCC 10895 / CBS 109.51 / FGSC 9923 / NRRL Y-1056</strain>
    </source>
</reference>
<reference key="2">
    <citation type="journal article" date="2013" name="G3 (Bethesda)">
        <title>Genomes of Ashbya fungi isolated from insects reveal four mating-type loci, numerous translocations, lack of transposons, and distinct gene duplications.</title>
        <authorList>
            <person name="Dietrich F.S."/>
            <person name="Voegeli S."/>
            <person name="Kuo S."/>
            <person name="Philippsen P."/>
        </authorList>
    </citation>
    <scope>GENOME REANNOTATION</scope>
    <source>
        <strain>ATCC 10895 / CBS 109.51 / FGSC 9923 / NRRL Y-1056</strain>
    </source>
</reference>
<evidence type="ECO:0000250" key="1"/>
<evidence type="ECO:0000255" key="2"/>
<evidence type="ECO:0000255" key="3">
    <source>
        <dbReference type="PROSITE-ProRule" id="PRU00272"/>
    </source>
</evidence>
<evidence type="ECO:0000305" key="4"/>
<sequence>MSDNSVATPAHLLQAKVIFLSFLLTGGFVATYSAFNRHLRQITSVHDIPTNVFRRKYLYGKVTSVGDGDNFLFFHTPGGVLGGWHWLRKVPTLQRKGILPRRAQKATGNALSTLSPLNLFRGLVGLRSEGGGRDQFALYRGRRKLPTLSIRLCGVDAPERAHFGNSSQPLSEEAYKWLNKTLLGRFVWVKPLSTDQYGRCVAKVEYWSWFRWKNVSIELLKQGLGVVYESKSGAEFDGQDTLYRYHESKAKKSKRGVWGLRHFETPGAYKKRINKQ</sequence>
<feature type="chain" id="PRO_0000408641" description="Probable endonuclease LCL3">
    <location>
        <begin position="1"/>
        <end position="276"/>
    </location>
</feature>
<feature type="transmembrane region" description="Helical" evidence="2">
    <location>
        <begin position="10"/>
        <end position="32"/>
    </location>
</feature>
<feature type="domain" description="TNase-like" evidence="3">
    <location>
        <begin position="56"/>
        <end position="260"/>
    </location>
</feature>
<feature type="active site" evidence="3">
    <location>
        <position position="151"/>
    </location>
</feature>
<feature type="active site" evidence="3">
    <location>
        <position position="159"/>
    </location>
</feature>
<feature type="active site" evidence="3">
    <location>
        <position position="199"/>
    </location>
</feature>
<feature type="binding site" evidence="3">
    <location>
        <position position="156"/>
    </location>
    <ligand>
        <name>Ca(2+)</name>
        <dbReference type="ChEBI" id="CHEBI:29108"/>
    </ligand>
</feature>
<organism>
    <name type="scientific">Eremothecium gossypii (strain ATCC 10895 / CBS 109.51 / FGSC 9923 / NRRL Y-1056)</name>
    <name type="common">Yeast</name>
    <name type="synonym">Ashbya gossypii</name>
    <dbReference type="NCBI Taxonomy" id="284811"/>
    <lineage>
        <taxon>Eukaryota</taxon>
        <taxon>Fungi</taxon>
        <taxon>Dikarya</taxon>
        <taxon>Ascomycota</taxon>
        <taxon>Saccharomycotina</taxon>
        <taxon>Saccharomycetes</taxon>
        <taxon>Saccharomycetales</taxon>
        <taxon>Saccharomycetaceae</taxon>
        <taxon>Eremothecium</taxon>
    </lineage>
</organism>
<dbReference type="EC" id="3.1.-.-"/>
<dbReference type="EMBL" id="AE016819">
    <property type="protein sequence ID" value="AAS53306.1"/>
    <property type="molecule type" value="Genomic_DNA"/>
</dbReference>
<dbReference type="RefSeq" id="NP_985482.1">
    <property type="nucleotide sequence ID" value="NM_210836.1"/>
</dbReference>
<dbReference type="SMR" id="Q754Z2"/>
<dbReference type="FunCoup" id="Q754Z2">
    <property type="interactions" value="19"/>
</dbReference>
<dbReference type="EnsemblFungi" id="AAS53306">
    <property type="protein sequence ID" value="AAS53306"/>
    <property type="gene ID" value="AGOS_AFL066C"/>
</dbReference>
<dbReference type="GeneID" id="4621712"/>
<dbReference type="KEGG" id="ago:AGOS_AFL066C"/>
<dbReference type="eggNOG" id="ENOG502S1U4">
    <property type="taxonomic scope" value="Eukaryota"/>
</dbReference>
<dbReference type="HOGENOM" id="CLU_046484_0_1_1"/>
<dbReference type="InParanoid" id="Q754Z2"/>
<dbReference type="OMA" id="IYHTPGG"/>
<dbReference type="OrthoDB" id="430293at2759"/>
<dbReference type="Proteomes" id="UP000000591">
    <property type="component" value="Chromosome VI"/>
</dbReference>
<dbReference type="GO" id="GO:0016020">
    <property type="term" value="C:membrane"/>
    <property type="evidence" value="ECO:0007669"/>
    <property type="project" value="UniProtKB-SubCell"/>
</dbReference>
<dbReference type="GO" id="GO:0005739">
    <property type="term" value="C:mitochondrion"/>
    <property type="evidence" value="ECO:0007669"/>
    <property type="project" value="UniProtKB-SubCell"/>
</dbReference>
<dbReference type="GO" id="GO:0004519">
    <property type="term" value="F:endonuclease activity"/>
    <property type="evidence" value="ECO:0007669"/>
    <property type="project" value="UniProtKB-KW"/>
</dbReference>
<dbReference type="GO" id="GO:0046872">
    <property type="term" value="F:metal ion binding"/>
    <property type="evidence" value="ECO:0007669"/>
    <property type="project" value="UniProtKB-KW"/>
</dbReference>
<dbReference type="Gene3D" id="2.40.50.90">
    <property type="match status" value="1"/>
</dbReference>
<dbReference type="InterPro" id="IPR035437">
    <property type="entry name" value="SNase_OB-fold_sf"/>
</dbReference>
<dbReference type="InterPro" id="IPR016071">
    <property type="entry name" value="Staphylococal_nuclease_OB-fold"/>
</dbReference>
<dbReference type="PANTHER" id="PTHR12302">
    <property type="entry name" value="EBNA2 BINDING PROTEIN P100"/>
    <property type="match status" value="1"/>
</dbReference>
<dbReference type="PANTHER" id="PTHR12302:SF3">
    <property type="entry name" value="SERINE_THREONINE-PROTEIN KINASE 31"/>
    <property type="match status" value="1"/>
</dbReference>
<dbReference type="Pfam" id="PF00565">
    <property type="entry name" value="SNase"/>
    <property type="match status" value="1"/>
</dbReference>
<dbReference type="SMART" id="SM00318">
    <property type="entry name" value="SNc"/>
    <property type="match status" value="1"/>
</dbReference>
<dbReference type="SUPFAM" id="SSF50199">
    <property type="entry name" value="Staphylococcal nuclease"/>
    <property type="match status" value="1"/>
</dbReference>
<dbReference type="PROSITE" id="PS50830">
    <property type="entry name" value="TNASE_3"/>
    <property type="match status" value="1"/>
</dbReference>
<accession>Q754Z2</accession>
<proteinExistence type="inferred from homology"/>
<name>LCL3_EREGS</name>